<gene>
    <name evidence="20 24" type="primary">ENPP7</name>
    <name type="ORF">UNQ3077/PRO9912</name>
</gene>
<dbReference type="EC" id="3.1.4.12" evidence="4 5 7 12"/>
<dbReference type="EMBL" id="AY230663">
    <property type="protein sequence ID" value="AAP69661.1"/>
    <property type="molecule type" value="mRNA"/>
</dbReference>
<dbReference type="EMBL" id="AY358622">
    <property type="protein sequence ID" value="AAQ88985.1"/>
    <property type="molecule type" value="mRNA"/>
</dbReference>
<dbReference type="EMBL" id="AK126250">
    <property type="protein sequence ID" value="BAC86504.1"/>
    <property type="molecule type" value="mRNA"/>
</dbReference>
<dbReference type="EMBL" id="BC041453">
    <property type="protein sequence ID" value="AAH41453.2"/>
    <property type="molecule type" value="mRNA"/>
</dbReference>
<dbReference type="CCDS" id="CCDS11763.1"/>
<dbReference type="RefSeq" id="NP_848638.3">
    <property type="nucleotide sequence ID" value="NM_178543.4"/>
</dbReference>
<dbReference type="PDB" id="5TCD">
    <property type="method" value="X-ray"/>
    <property type="resolution" value="2.40 A"/>
    <property type="chains" value="A=22-433"/>
</dbReference>
<dbReference type="PDB" id="5UDY">
    <property type="method" value="X-ray"/>
    <property type="resolution" value="2.60 A"/>
    <property type="chains" value="A=22-433"/>
</dbReference>
<dbReference type="PDBsum" id="5TCD"/>
<dbReference type="PDBsum" id="5UDY"/>
<dbReference type="SMR" id="Q6UWV6"/>
<dbReference type="BioGRID" id="130844">
    <property type="interactions" value="31"/>
</dbReference>
<dbReference type="FunCoup" id="Q6UWV6">
    <property type="interactions" value="83"/>
</dbReference>
<dbReference type="IntAct" id="Q6UWV6">
    <property type="interactions" value="27"/>
</dbReference>
<dbReference type="STRING" id="9606.ENSP00000332656"/>
<dbReference type="ChEMBL" id="CHEMBL6058"/>
<dbReference type="SwissLipids" id="SLP:000000173"/>
<dbReference type="GlyCosmos" id="Q6UWV6">
    <property type="glycosylation" value="5 sites, No reported glycans"/>
</dbReference>
<dbReference type="GlyGen" id="Q6UWV6">
    <property type="glycosylation" value="8 sites, 14 N-linked glycans (4 sites)"/>
</dbReference>
<dbReference type="iPTMnet" id="Q6UWV6"/>
<dbReference type="PhosphoSitePlus" id="Q6UWV6"/>
<dbReference type="BioMuta" id="ENPP7"/>
<dbReference type="DMDM" id="134047772"/>
<dbReference type="jPOST" id="Q6UWV6"/>
<dbReference type="MassIVE" id="Q6UWV6"/>
<dbReference type="PaxDb" id="9606-ENSP00000332656"/>
<dbReference type="PeptideAtlas" id="Q6UWV6"/>
<dbReference type="ProteomicsDB" id="67528"/>
<dbReference type="Antibodypedia" id="19751">
    <property type="antibodies" value="245 antibodies from 27 providers"/>
</dbReference>
<dbReference type="DNASU" id="339221"/>
<dbReference type="Ensembl" id="ENST00000328313.10">
    <property type="protein sequence ID" value="ENSP00000332656.5"/>
    <property type="gene ID" value="ENSG00000182156.10"/>
</dbReference>
<dbReference type="GeneID" id="339221"/>
<dbReference type="KEGG" id="hsa:339221"/>
<dbReference type="MANE-Select" id="ENST00000328313.10">
    <property type="protein sequence ID" value="ENSP00000332656.5"/>
    <property type="RefSeq nucleotide sequence ID" value="NM_178543.5"/>
    <property type="RefSeq protein sequence ID" value="NP_848638.3"/>
</dbReference>
<dbReference type="UCSC" id="uc002jxa.5">
    <property type="organism name" value="human"/>
</dbReference>
<dbReference type="AGR" id="HGNC:23764"/>
<dbReference type="CTD" id="339221"/>
<dbReference type="DisGeNET" id="339221"/>
<dbReference type="GeneCards" id="ENPP7"/>
<dbReference type="HGNC" id="HGNC:23764">
    <property type="gene designation" value="ENPP7"/>
</dbReference>
<dbReference type="HPA" id="ENSG00000182156">
    <property type="expression patterns" value="Tissue enriched (intestine)"/>
</dbReference>
<dbReference type="MalaCards" id="ENPP7"/>
<dbReference type="MIM" id="616997">
    <property type="type" value="gene"/>
</dbReference>
<dbReference type="neXtProt" id="NX_Q6UWV6"/>
<dbReference type="OpenTargets" id="ENSG00000182156"/>
<dbReference type="PharmGKB" id="PA134986550"/>
<dbReference type="VEuPathDB" id="HostDB:ENSG00000182156"/>
<dbReference type="eggNOG" id="KOG2645">
    <property type="taxonomic scope" value="Eukaryota"/>
</dbReference>
<dbReference type="GeneTree" id="ENSGT00940000159339"/>
<dbReference type="HOGENOM" id="CLU_017594_1_0_1"/>
<dbReference type="InParanoid" id="Q6UWV6"/>
<dbReference type="OMA" id="IAHNYKN"/>
<dbReference type="OrthoDB" id="415411at2759"/>
<dbReference type="PAN-GO" id="Q6UWV6">
    <property type="GO annotations" value="0 GO annotations based on evolutionary models"/>
</dbReference>
<dbReference type="PhylomeDB" id="Q6UWV6"/>
<dbReference type="TreeFam" id="TF330032"/>
<dbReference type="BRENDA" id="3.1.4.12">
    <property type="organism ID" value="2681"/>
</dbReference>
<dbReference type="PathwayCommons" id="Q6UWV6"/>
<dbReference type="Reactome" id="R-HSA-9840310">
    <property type="pathway name" value="Glycosphingolipid catabolism"/>
</dbReference>
<dbReference type="SignaLink" id="Q6UWV6"/>
<dbReference type="BioGRID-ORCS" id="339221">
    <property type="hits" value="20 hits in 1149 CRISPR screens"/>
</dbReference>
<dbReference type="GeneWiki" id="ENPP7"/>
<dbReference type="GenomeRNAi" id="339221"/>
<dbReference type="Pharos" id="Q6UWV6">
    <property type="development level" value="Tbio"/>
</dbReference>
<dbReference type="PRO" id="PR:Q6UWV6"/>
<dbReference type="Proteomes" id="UP000005640">
    <property type="component" value="Chromosome 17"/>
</dbReference>
<dbReference type="RNAct" id="Q6UWV6">
    <property type="molecule type" value="protein"/>
</dbReference>
<dbReference type="Bgee" id="ENSG00000182156">
    <property type="expression patterns" value="Expressed in jejunal mucosa and 75 other cell types or tissues"/>
</dbReference>
<dbReference type="ExpressionAtlas" id="Q6UWV6">
    <property type="expression patterns" value="baseline and differential"/>
</dbReference>
<dbReference type="GO" id="GO:0005794">
    <property type="term" value="C:Golgi apparatus"/>
    <property type="evidence" value="ECO:0000314"/>
    <property type="project" value="UniProtKB"/>
</dbReference>
<dbReference type="GO" id="GO:0016020">
    <property type="term" value="C:membrane"/>
    <property type="evidence" value="ECO:0000303"/>
    <property type="project" value="UniProtKB"/>
</dbReference>
<dbReference type="GO" id="GO:0005902">
    <property type="term" value="C:microvillus"/>
    <property type="evidence" value="ECO:0000314"/>
    <property type="project" value="UniProtKB"/>
</dbReference>
<dbReference type="GO" id="GO:0005886">
    <property type="term" value="C:plasma membrane"/>
    <property type="evidence" value="ECO:0000314"/>
    <property type="project" value="UniProtKB"/>
</dbReference>
<dbReference type="GO" id="GO:0008081">
    <property type="term" value="F:phosphoric diester hydrolase activity"/>
    <property type="evidence" value="ECO:0000314"/>
    <property type="project" value="UniProtKB"/>
</dbReference>
<dbReference type="GO" id="GO:0004767">
    <property type="term" value="F:sphingomyelin phosphodiesterase activity"/>
    <property type="evidence" value="ECO:0000314"/>
    <property type="project" value="UniProtKB"/>
</dbReference>
<dbReference type="GO" id="GO:0008270">
    <property type="term" value="F:zinc ion binding"/>
    <property type="evidence" value="ECO:0000314"/>
    <property type="project" value="UniProtKB"/>
</dbReference>
<dbReference type="GO" id="GO:0055089">
    <property type="term" value="P:fatty acid homeostasis"/>
    <property type="evidence" value="ECO:0000250"/>
    <property type="project" value="UniProtKB"/>
</dbReference>
<dbReference type="GO" id="GO:0046479">
    <property type="term" value="P:glycosphingolipid catabolic process"/>
    <property type="evidence" value="ECO:0000304"/>
    <property type="project" value="Reactome"/>
</dbReference>
<dbReference type="GO" id="GO:0044241">
    <property type="term" value="P:lipid digestion"/>
    <property type="evidence" value="ECO:0000250"/>
    <property type="project" value="UniProtKB"/>
</dbReference>
<dbReference type="GO" id="GO:0008285">
    <property type="term" value="P:negative regulation of cell population proliferation"/>
    <property type="evidence" value="ECO:0000314"/>
    <property type="project" value="UniProtKB"/>
</dbReference>
<dbReference type="GO" id="GO:0008156">
    <property type="term" value="P:negative regulation of DNA replication"/>
    <property type="evidence" value="ECO:0000314"/>
    <property type="project" value="UniProtKB"/>
</dbReference>
<dbReference type="GO" id="GO:2000304">
    <property type="term" value="P:positive regulation of ceramide biosynthetic process"/>
    <property type="evidence" value="ECO:0000250"/>
    <property type="project" value="UniProtKB"/>
</dbReference>
<dbReference type="GO" id="GO:0045797">
    <property type="term" value="P:positive regulation of intestinal cholesterol absorption"/>
    <property type="evidence" value="ECO:0000250"/>
    <property type="project" value="UniProtKB"/>
</dbReference>
<dbReference type="GO" id="GO:2000755">
    <property type="term" value="P:positive regulation of sphingomyelin catabolic process"/>
    <property type="evidence" value="ECO:0000250"/>
    <property type="project" value="UniProtKB"/>
</dbReference>
<dbReference type="GO" id="GO:1904729">
    <property type="term" value="P:regulation of intestinal lipid absorption"/>
    <property type="evidence" value="ECO:0000250"/>
    <property type="project" value="UniProtKB"/>
</dbReference>
<dbReference type="GO" id="GO:0006684">
    <property type="term" value="P:sphingomyelin metabolic process"/>
    <property type="evidence" value="ECO:0000314"/>
    <property type="project" value="UniProtKB"/>
</dbReference>
<dbReference type="CDD" id="cd16018">
    <property type="entry name" value="Enpp"/>
    <property type="match status" value="1"/>
</dbReference>
<dbReference type="FunFam" id="3.30.1360.180:FF:000005">
    <property type="entry name" value="ectonucleotide pyrophosphatase/phosphodiesterase family member 7"/>
    <property type="match status" value="1"/>
</dbReference>
<dbReference type="FunFam" id="3.40.720.10:FF:000048">
    <property type="entry name" value="ectonucleotide pyrophosphatase/phosphodiesterase family member 7"/>
    <property type="match status" value="1"/>
</dbReference>
<dbReference type="Gene3D" id="3.30.1360.180">
    <property type="match status" value="1"/>
</dbReference>
<dbReference type="Gene3D" id="3.40.720.10">
    <property type="entry name" value="Alkaline Phosphatase, subunit A"/>
    <property type="match status" value="1"/>
</dbReference>
<dbReference type="InterPro" id="IPR017850">
    <property type="entry name" value="Alkaline_phosphatase_core_sf"/>
</dbReference>
<dbReference type="InterPro" id="IPR002591">
    <property type="entry name" value="Phosphodiest/P_Trfase"/>
</dbReference>
<dbReference type="PANTHER" id="PTHR10151">
    <property type="entry name" value="ECTONUCLEOTIDE PYROPHOSPHATASE/PHOSPHODIESTERASE"/>
    <property type="match status" value="1"/>
</dbReference>
<dbReference type="PANTHER" id="PTHR10151:SF63">
    <property type="entry name" value="ECTONUCLEOTIDE PYROPHOSPHATASE_PHOSPHODIESTERASE FAMILY MEMBER 7"/>
    <property type="match status" value="1"/>
</dbReference>
<dbReference type="Pfam" id="PF01663">
    <property type="entry name" value="Phosphodiest"/>
    <property type="match status" value="1"/>
</dbReference>
<dbReference type="SUPFAM" id="SSF53649">
    <property type="entry name" value="Alkaline phosphatase-like"/>
    <property type="match status" value="1"/>
</dbReference>
<sequence length="458" mass="51478">MRGPAVLLTVALATLLAPGAGAPVQSQGSQNKLLLVSFDGFRWNYDQDVDTPNLDAMARDGVKARYMTPAFVTMTSPCHFTLVTGKYIENHGVVHNMYYNTTSKVKLPYHATLGIQRWWDNGSVPIWITAQRQGLRAGSFFYPGGNVTYQGVAVTRSRKEGIAHNYKNETEWRANIDTVMAWFTEEDLDLVTLYFGEPDSTGHRYGPESPERREMVRQVDRTVGYLRESIARNHLTDRLNLIITSDHGMTTVDKRAGDLVEFHKFPNFTFRDIEFELLDYGPNGMLLPKEGRLEKVYDALKDAHPKLHVYKKEAFPEAFHYANNPRVTPLLMYSDLGYVIHGRINVQFNNGEHGFDNKDMDMKTIFRAVGPSFRAGLEVEPFESVHVYELMCRLLGIVPEANDGHLATLLPMLHTESALPPDGRPTLLPKGRSALPPSSRPLLVMGLLGTVILLSEVA</sequence>
<proteinExistence type="evidence at protein level"/>
<name>ENPP7_HUMAN</name>
<evidence type="ECO:0000250" key="1">
    <source>
        <dbReference type="UniProtKB" id="Q3TIW9"/>
    </source>
</evidence>
<evidence type="ECO:0000250" key="2">
    <source>
        <dbReference type="UniProtKB" id="Q5EZ72"/>
    </source>
</evidence>
<evidence type="ECO:0000255" key="3"/>
<evidence type="ECO:0000269" key="4">
    <source>
    </source>
</evidence>
<evidence type="ECO:0000269" key="5">
    <source>
    </source>
</evidence>
<evidence type="ECO:0000269" key="6">
    <source>
    </source>
</evidence>
<evidence type="ECO:0000269" key="7">
    <source>
    </source>
</evidence>
<evidence type="ECO:0000269" key="8">
    <source>
    </source>
</evidence>
<evidence type="ECO:0000269" key="9">
    <source>
    </source>
</evidence>
<evidence type="ECO:0000269" key="10">
    <source>
    </source>
</evidence>
<evidence type="ECO:0000269" key="11">
    <source>
    </source>
</evidence>
<evidence type="ECO:0000269" key="12">
    <source>
    </source>
</evidence>
<evidence type="ECO:0000303" key="13">
    <source>
    </source>
</evidence>
<evidence type="ECO:0000303" key="14">
    <source>
    </source>
</evidence>
<evidence type="ECO:0000303" key="15">
    <source>
    </source>
</evidence>
<evidence type="ECO:0000303" key="16">
    <source>
    </source>
</evidence>
<evidence type="ECO:0000305" key="17"/>
<evidence type="ECO:0000305" key="18">
    <source>
    </source>
</evidence>
<evidence type="ECO:0000305" key="19">
    <source>
    </source>
</evidence>
<evidence type="ECO:0000312" key="20">
    <source>
        <dbReference type="EMBL" id="AAH41453.2"/>
    </source>
</evidence>
<evidence type="ECO:0000312" key="21">
    <source>
        <dbReference type="EMBL" id="AAP69661.1"/>
    </source>
</evidence>
<evidence type="ECO:0000312" key="22">
    <source>
        <dbReference type="EMBL" id="AAQ88985.1"/>
    </source>
</evidence>
<evidence type="ECO:0000312" key="23">
    <source>
        <dbReference type="EMBL" id="BAC86504.1"/>
    </source>
</evidence>
<evidence type="ECO:0000312" key="24">
    <source>
        <dbReference type="HGNC" id="HGNC:23764"/>
    </source>
</evidence>
<evidence type="ECO:0007744" key="25">
    <source>
        <dbReference type="PDB" id="5TCD"/>
    </source>
</evidence>
<evidence type="ECO:0007744" key="26">
    <source>
        <dbReference type="PDB" id="5UDY"/>
    </source>
</evidence>
<evidence type="ECO:0007829" key="27">
    <source>
        <dbReference type="PDB" id="5TCD"/>
    </source>
</evidence>
<accession>Q6UWV6</accession>
<accession>Q6ZTS5</accession>
<accession>Q8IUS8</accession>
<protein>
    <recommendedName>
        <fullName>Ectonucleotide pyrophosphatase/phosphodiesterase family member 7</fullName>
        <shortName>E-NPP 7</shortName>
        <shortName>NPP-7</shortName>
        <ecNumber evidence="4 5 7 12">3.1.4.12</ecNumber>
    </recommendedName>
    <alternativeName>
        <fullName>Alkaline sphingomyelin phosphodiesterase</fullName>
    </alternativeName>
    <alternativeName>
        <fullName evidence="13 14">Intestinal alkaline sphingomyelinase</fullName>
        <shortName evidence="14 16">Alk-SMase</shortName>
    </alternativeName>
</protein>
<reference evidence="17 21" key="1">
    <citation type="journal article" date="2003" name="J. Biol. Chem.">
        <title>Identification of human intestinal alkaline sphingomyelinase as a novel ecto-enzyme related to the nucleotide phosphodiesterase family.</title>
        <authorList>
            <person name="Duan R.-D."/>
            <person name="Bergman T."/>
            <person name="Xu N."/>
            <person name="Wu J."/>
            <person name="Cheng Y."/>
            <person name="Duan J."/>
            <person name="Nelander S."/>
            <person name="Palmberg C."/>
            <person name="Nilsson A."/>
        </authorList>
    </citation>
    <scope>NUCLEOTIDE SEQUENCE [MRNA]</scope>
    <scope>PROTEIN SEQUENCE OF 137-151; 239-248; 256-271 AND 313-326</scope>
    <scope>FUNCTION</scope>
    <scope>IDENTIFICATION BY MASS SPECTROMETRY</scope>
    <scope>CATALYTIC ACTIVITY</scope>
    <scope>ACTIVITY REGULATION</scope>
    <scope>SUBCELLULAR LOCATION</scope>
    <scope>TISSUE SPECIFICITY</scope>
    <source>
        <tissue evidence="5">Colon</tissue>
        <tissue evidence="5">Kidney</tissue>
        <tissue evidence="5">Small intestine</tissue>
        <tissue evidence="5">Stomach</tissue>
    </source>
</reference>
<reference evidence="17 22" key="2">
    <citation type="journal article" date="2003" name="Genome Res.">
        <title>The secreted protein discovery initiative (SPDI), a large-scale effort to identify novel human secreted and transmembrane proteins: a bioinformatics assessment.</title>
        <authorList>
            <person name="Clark H.F."/>
            <person name="Gurney A.L."/>
            <person name="Abaya E."/>
            <person name="Baker K."/>
            <person name="Baldwin D.T."/>
            <person name="Brush J."/>
            <person name="Chen J."/>
            <person name="Chow B."/>
            <person name="Chui C."/>
            <person name="Crowley C."/>
            <person name="Currell B."/>
            <person name="Deuel B."/>
            <person name="Dowd P."/>
            <person name="Eaton D."/>
            <person name="Foster J.S."/>
            <person name="Grimaldi C."/>
            <person name="Gu Q."/>
            <person name="Hass P.E."/>
            <person name="Heldens S."/>
            <person name="Huang A."/>
            <person name="Kim H.S."/>
            <person name="Klimowski L."/>
            <person name="Jin Y."/>
            <person name="Johnson S."/>
            <person name="Lee J."/>
            <person name="Lewis L."/>
            <person name="Liao D."/>
            <person name="Mark M.R."/>
            <person name="Robbie E."/>
            <person name="Sanchez C."/>
            <person name="Schoenfeld J."/>
            <person name="Seshagiri S."/>
            <person name="Simmons L."/>
            <person name="Singh J."/>
            <person name="Smith V."/>
            <person name="Stinson J."/>
            <person name="Vagts A."/>
            <person name="Vandlen R.L."/>
            <person name="Watanabe C."/>
            <person name="Wieand D."/>
            <person name="Woods K."/>
            <person name="Xie M.-H."/>
            <person name="Yansura D.G."/>
            <person name="Yi S."/>
            <person name="Yu G."/>
            <person name="Yuan J."/>
            <person name="Zhang M."/>
            <person name="Zhang Z."/>
            <person name="Goddard A.D."/>
            <person name="Wood W.I."/>
            <person name="Godowski P.J."/>
            <person name="Gray A.M."/>
        </authorList>
    </citation>
    <scope>NUCLEOTIDE SEQUENCE [LARGE SCALE MRNA]</scope>
</reference>
<reference evidence="17 23" key="3">
    <citation type="journal article" date="2004" name="Nat. Genet.">
        <title>Complete sequencing and characterization of 21,243 full-length human cDNAs.</title>
        <authorList>
            <person name="Ota T."/>
            <person name="Suzuki Y."/>
            <person name="Nishikawa T."/>
            <person name="Otsuki T."/>
            <person name="Sugiyama T."/>
            <person name="Irie R."/>
            <person name="Wakamatsu A."/>
            <person name="Hayashi K."/>
            <person name="Sato H."/>
            <person name="Nagai K."/>
            <person name="Kimura K."/>
            <person name="Makita H."/>
            <person name="Sekine M."/>
            <person name="Obayashi M."/>
            <person name="Nishi T."/>
            <person name="Shibahara T."/>
            <person name="Tanaka T."/>
            <person name="Ishii S."/>
            <person name="Yamamoto J."/>
            <person name="Saito K."/>
            <person name="Kawai Y."/>
            <person name="Isono Y."/>
            <person name="Nakamura Y."/>
            <person name="Nagahari K."/>
            <person name="Murakami K."/>
            <person name="Yasuda T."/>
            <person name="Iwayanagi T."/>
            <person name="Wagatsuma M."/>
            <person name="Shiratori A."/>
            <person name="Sudo H."/>
            <person name="Hosoiri T."/>
            <person name="Kaku Y."/>
            <person name="Kodaira H."/>
            <person name="Kondo H."/>
            <person name="Sugawara M."/>
            <person name="Takahashi M."/>
            <person name="Kanda K."/>
            <person name="Yokoi T."/>
            <person name="Furuya T."/>
            <person name="Kikkawa E."/>
            <person name="Omura Y."/>
            <person name="Abe K."/>
            <person name="Kamihara K."/>
            <person name="Katsuta N."/>
            <person name="Sato K."/>
            <person name="Tanikawa M."/>
            <person name="Yamazaki M."/>
            <person name="Ninomiya K."/>
            <person name="Ishibashi T."/>
            <person name="Yamashita H."/>
            <person name="Murakawa K."/>
            <person name="Fujimori K."/>
            <person name="Tanai H."/>
            <person name="Kimata M."/>
            <person name="Watanabe M."/>
            <person name="Hiraoka S."/>
            <person name="Chiba Y."/>
            <person name="Ishida S."/>
            <person name="Ono Y."/>
            <person name="Takiguchi S."/>
            <person name="Watanabe S."/>
            <person name="Yosida M."/>
            <person name="Hotuta T."/>
            <person name="Kusano J."/>
            <person name="Kanehori K."/>
            <person name="Takahashi-Fujii A."/>
            <person name="Hara H."/>
            <person name="Tanase T.-O."/>
            <person name="Nomura Y."/>
            <person name="Togiya S."/>
            <person name="Komai F."/>
            <person name="Hara R."/>
            <person name="Takeuchi K."/>
            <person name="Arita M."/>
            <person name="Imose N."/>
            <person name="Musashino K."/>
            <person name="Yuuki H."/>
            <person name="Oshima A."/>
            <person name="Sasaki N."/>
            <person name="Aotsuka S."/>
            <person name="Yoshikawa Y."/>
            <person name="Matsunawa H."/>
            <person name="Ichihara T."/>
            <person name="Shiohata N."/>
            <person name="Sano S."/>
            <person name="Moriya S."/>
            <person name="Momiyama H."/>
            <person name="Satoh N."/>
            <person name="Takami S."/>
            <person name="Terashima Y."/>
            <person name="Suzuki O."/>
            <person name="Nakagawa S."/>
            <person name="Senoh A."/>
            <person name="Mizoguchi H."/>
            <person name="Goto Y."/>
            <person name="Shimizu F."/>
            <person name="Wakebe H."/>
            <person name="Hishigaki H."/>
            <person name="Watanabe T."/>
            <person name="Sugiyama A."/>
            <person name="Takemoto M."/>
            <person name="Kawakami B."/>
            <person name="Yamazaki M."/>
            <person name="Watanabe K."/>
            <person name="Kumagai A."/>
            <person name="Itakura S."/>
            <person name="Fukuzumi Y."/>
            <person name="Fujimori Y."/>
            <person name="Komiyama M."/>
            <person name="Tashiro H."/>
            <person name="Tanigami A."/>
            <person name="Fujiwara T."/>
            <person name="Ono T."/>
            <person name="Yamada K."/>
            <person name="Fujii Y."/>
            <person name="Ozaki K."/>
            <person name="Hirao M."/>
            <person name="Ohmori Y."/>
            <person name="Kawabata A."/>
            <person name="Hikiji T."/>
            <person name="Kobatake N."/>
            <person name="Inagaki H."/>
            <person name="Ikema Y."/>
            <person name="Okamoto S."/>
            <person name="Okitani R."/>
            <person name="Kawakami T."/>
            <person name="Noguchi S."/>
            <person name="Itoh T."/>
            <person name="Shigeta K."/>
            <person name="Senba T."/>
            <person name="Matsumura K."/>
            <person name="Nakajima Y."/>
            <person name="Mizuno T."/>
            <person name="Morinaga M."/>
            <person name="Sasaki M."/>
            <person name="Togashi T."/>
            <person name="Oyama M."/>
            <person name="Hata H."/>
            <person name="Watanabe M."/>
            <person name="Komatsu T."/>
            <person name="Mizushima-Sugano J."/>
            <person name="Satoh T."/>
            <person name="Shirai Y."/>
            <person name="Takahashi Y."/>
            <person name="Nakagawa K."/>
            <person name="Okumura K."/>
            <person name="Nagase T."/>
            <person name="Nomura N."/>
            <person name="Kikuchi H."/>
            <person name="Masuho Y."/>
            <person name="Yamashita R."/>
            <person name="Nakai K."/>
            <person name="Yada T."/>
            <person name="Nakamura Y."/>
            <person name="Ohara O."/>
            <person name="Isogai T."/>
            <person name="Sugano S."/>
        </authorList>
    </citation>
    <scope>NUCLEOTIDE SEQUENCE [LARGE SCALE MRNA]</scope>
    <source>
        <tissue evidence="23">Liver</tissue>
    </source>
</reference>
<reference evidence="17 20" key="4">
    <citation type="journal article" date="2004" name="Genome Res.">
        <title>The status, quality, and expansion of the NIH full-length cDNA project: the Mammalian Gene Collection (MGC).</title>
        <authorList>
            <consortium name="The MGC Project Team"/>
        </authorList>
    </citation>
    <scope>NUCLEOTIDE SEQUENCE [LARGE SCALE MRNA]</scope>
    <source>
        <tissue evidence="20">Colon</tissue>
    </source>
</reference>
<reference evidence="17" key="5">
    <citation type="journal article" date="2004" name="Protein Sci.">
        <title>Signal peptide prediction based on analysis of experimentally verified cleavage sites.</title>
        <authorList>
            <person name="Zhang Z."/>
            <person name="Henzel W.J."/>
        </authorList>
    </citation>
    <scope>PROTEIN SEQUENCE OF 22-36</scope>
</reference>
<reference evidence="17" key="6">
    <citation type="journal article" date="2003" name="J. Lipid Res.">
        <title>Purification, localization, and expression of human intestinal alkaline sphingomyelinase.</title>
        <authorList>
            <person name="Duan R.-D."/>
            <person name="Cheng Y."/>
            <person name="Hansen G."/>
            <person name="Hertervig E."/>
            <person name="Liu J.-J."/>
            <person name="Syk I."/>
            <person name="Sjostrom H."/>
            <person name="Nilsson A."/>
        </authorList>
    </citation>
    <scope>FUNCTION</scope>
    <scope>CATALYTIC ACTIVITY</scope>
    <scope>SUBCELLULAR LOCATION</scope>
    <scope>TISSUE SPECIFICITY</scope>
</reference>
<reference key="7">
    <citation type="journal article" date="2004" name="Am. J. Physiol.">
        <title>Pancreatic trypsin cleaves intestinal alkaline sphingomyelinase from mucosa and enhances the sphingomyelinase activity.</title>
        <authorList>
            <person name="Wu J."/>
            <person name="Liu F."/>
            <person name="Nilsson A."/>
            <person name="Duan R.D."/>
        </authorList>
    </citation>
    <scope>CATALYTIC ACTIVITY</scope>
    <scope>FUNCTION</scope>
    <scope>SUBCELLULAR LOCATION</scope>
    <scope>TOPOLOGY</scope>
</reference>
<reference evidence="17" key="8">
    <citation type="journal article" date="2004" name="Carcinogenesis">
        <title>Identification of one exon deletion of intestinal alkaline sphingomyelinase in colon cancer HT-29 cells and a differentiation-related expression of the wild-type enzyme in Caco-2 cells.</title>
        <authorList>
            <person name="Wu J."/>
            <person name="Cheng Y."/>
            <person name="Nilsson A."/>
            <person name="Duan R.-D."/>
        </authorList>
    </citation>
    <scope>MUTAGENESIS OF HIS-353</scope>
</reference>
<reference evidence="17" key="9">
    <citation type="journal article" date="2005" name="Biochem. J.">
        <title>Functional studies of human intestinal alkaline sphingomyelinase by deglycosylation and mutagenesis.</title>
        <authorList>
            <person name="Wu J."/>
            <person name="Hansen G.H."/>
            <person name="Nilsson A."/>
            <person name="Duan R.-D."/>
        </authorList>
    </citation>
    <scope>GLYCOSYLATION AT ASN-100; ASN-121; ASN-146; ASN-168 AND ASN-267</scope>
    <scope>MUTAGENESIS OF SER-76; CYS-78; ASN-100; ASN-121; ASN-146; ASN-168 AND ASN-267</scope>
</reference>
<reference key="10">
    <citation type="journal article" date="2006" name="Biochem. J.">
        <title>Intestinal alkaline sphingomyelinase hydrolyses and inactivates platelet-activating factor by a phospholipase C activity.</title>
        <authorList>
            <person name="Wu J."/>
            <person name="Nilsson A."/>
            <person name="Joensson B.A."/>
            <person name="Stenstad H."/>
            <person name="Agace W."/>
            <person name="Cheng Y."/>
            <person name="Duan R.D."/>
        </authorList>
    </citation>
    <scope>CATALYTIC ACTIVITY</scope>
    <scope>FUNCTION</scope>
</reference>
<reference key="11">
    <citation type="journal article" date="2009" name="J. Proteome Res.">
        <title>Glycoproteomics analysis of human liver tissue by combination of multiple enzyme digestion and hydrazide chemistry.</title>
        <authorList>
            <person name="Chen R."/>
            <person name="Jiang X."/>
            <person name="Sun D."/>
            <person name="Han G."/>
            <person name="Wang F."/>
            <person name="Ye M."/>
            <person name="Wang L."/>
            <person name="Zou H."/>
        </authorList>
    </citation>
    <scope>GLYCOSYLATION [LARGE SCALE ANALYSIS] AT ASN-146</scope>
    <source>
        <tissue>Liver</tissue>
    </source>
</reference>
<reference evidence="25 26" key="12">
    <citation type="journal article" date="2017" name="J. Biol. Chem.">
        <title>Crystal structure of the human alkaline sphingomyelinase provides insights into substrate recognition.</title>
        <authorList>
            <person name="Gorelik A."/>
            <person name="Liu F."/>
            <person name="Illes K."/>
            <person name="Nagar B."/>
        </authorList>
    </citation>
    <scope>X-RAY CRYSTALLOGRAPHY (2.40 ANGSTROMS) OF 17-433 IN COMPLEX WITH ZINC AND PHOSPHOCHOLINE</scope>
    <scope>CATALYTIC ACTIVITY</scope>
    <scope>FUNCTION</scope>
    <scope>COFACTOR</scope>
    <scope>GLYCOSYLATION AT ASN-100; ASN-121; ASN-146; ASN-168 AND ASN-267</scope>
    <scope>MUTAGENESIS OF TYR-109; TYR-166; ARG-271; ARG-343 AND 344-ILE--PHE-348</scope>
</reference>
<feature type="signal peptide" evidence="3 8">
    <location>
        <begin position="1"/>
        <end position="21"/>
    </location>
</feature>
<feature type="chain" id="PRO_0000036403" description="Ectonucleotide pyrophosphatase/phosphodiesterase family member 7">
    <location>
        <begin position="22"/>
        <end position="458"/>
    </location>
</feature>
<feature type="topological domain" description="Extracellular" evidence="17">
    <location>
        <begin position="22"/>
        <end position="433"/>
    </location>
</feature>
<feature type="transmembrane region" description="Helical" evidence="3">
    <location>
        <begin position="434"/>
        <end position="454"/>
    </location>
</feature>
<feature type="topological domain" description="Cytoplasmic" evidence="17">
    <location>
        <begin position="455"/>
        <end position="458"/>
    </location>
</feature>
<feature type="region of interest" description="Required for enzyme activity" evidence="9">
    <location>
        <begin position="72"/>
        <end position="78"/>
    </location>
</feature>
<feature type="active site" description="Nucleophile" evidence="19">
    <location>
        <position position="75"/>
    </location>
</feature>
<feature type="binding site" evidence="19 25 26">
    <location>
        <position position="39"/>
    </location>
    <ligand>
        <name>Zn(2+)</name>
        <dbReference type="ChEBI" id="CHEBI:29105"/>
        <label>1</label>
    </ligand>
</feature>
<feature type="binding site" evidence="19 25 26">
    <location>
        <position position="75"/>
    </location>
    <ligand>
        <name>Zn(2+)</name>
        <dbReference type="ChEBI" id="CHEBI:29105"/>
        <label>1</label>
    </ligand>
</feature>
<feature type="binding site" evidence="19 25">
    <location>
        <position position="96"/>
    </location>
    <ligand>
        <name>substrate</name>
    </ligand>
</feature>
<feature type="binding site" evidence="19 25 26">
    <location>
        <position position="199"/>
    </location>
    <ligand>
        <name>Zn(2+)</name>
        <dbReference type="ChEBI" id="CHEBI:29105"/>
        <label>2</label>
    </ligand>
</feature>
<feature type="binding site" evidence="19 25 26">
    <location>
        <position position="203"/>
    </location>
    <ligand>
        <name>Zn(2+)</name>
        <dbReference type="ChEBI" id="CHEBI:29105"/>
        <label>2</label>
    </ligand>
</feature>
<feature type="binding site" evidence="19 25 26">
    <location>
        <position position="246"/>
    </location>
    <ligand>
        <name>Zn(2+)</name>
        <dbReference type="ChEBI" id="CHEBI:29105"/>
        <label>1</label>
    </ligand>
</feature>
<feature type="binding site" evidence="19 25 26">
    <location>
        <position position="247"/>
    </location>
    <ligand>
        <name>Zn(2+)</name>
        <dbReference type="ChEBI" id="CHEBI:29105"/>
        <label>1</label>
    </ligand>
</feature>
<feature type="binding site" evidence="19 25 26">
    <location>
        <position position="353"/>
    </location>
    <ligand>
        <name>Zn(2+)</name>
        <dbReference type="ChEBI" id="CHEBI:29105"/>
        <label>2</label>
    </ligand>
</feature>
<feature type="glycosylation site" description="N-linked (GlcNAc...) asparagine" evidence="9 12 25 26">
    <location>
        <position position="100"/>
    </location>
</feature>
<feature type="glycosylation site" description="N-linked (GlcNAc...) asparagine" evidence="9 12 25 26">
    <location>
        <position position="121"/>
    </location>
</feature>
<feature type="glycosylation site" description="N-linked (GlcNAc...) asparagine" evidence="9 11 12 25 26">
    <location>
        <position position="146"/>
    </location>
</feature>
<feature type="glycosylation site" description="N-linked (GlcNAc...) asparagine" evidence="9 12 25 26">
    <location>
        <position position="168"/>
    </location>
</feature>
<feature type="glycosylation site" description="N-linked (GlcNAc...) asparagine" evidence="9 12 25">
    <location>
        <position position="267"/>
    </location>
</feature>
<feature type="sequence variant" id="VAR_021506" description="In dbSNP:rs8074547.">
    <original>P</original>
    <variation>L</variation>
    <location>
        <position position="4"/>
    </location>
</feature>
<feature type="mutagenesis site" description="Loss of activity." evidence="9">
    <original>S</original>
    <variation>F</variation>
    <location>
        <position position="76"/>
    </location>
</feature>
<feature type="mutagenesis site" description="Strongly reduces activity." evidence="9">
    <original>C</original>
    <variation>N</variation>
    <location>
        <position position="78"/>
    </location>
</feature>
<feature type="mutagenesis site" description="Strongly reduces N-glycosylation and enzyme activity; when associated with Q-121; Q-146; Q-168 and Q-267." evidence="9">
    <original>N</original>
    <variation>Q</variation>
    <location>
        <position position="100"/>
    </location>
</feature>
<feature type="mutagenesis site" description="Decreased enzyme activity with sphingomyelin and para-nitrophenylphosphorylcholine." evidence="12">
    <original>Y</original>
    <variation>L</variation>
    <location>
        <position position="109"/>
    </location>
</feature>
<feature type="mutagenesis site" description="Strongly reduces N-glycosylation and enzyme activity; when associated with Q-100; Q-146; Q-168 and Q-267." evidence="9">
    <original>N</original>
    <variation>Q</variation>
    <location>
        <position position="121"/>
    </location>
</feature>
<feature type="mutagenesis site" description="Strongly reduces N-glycosylation and enzyme activity; when associated with Q-100; Q-146; Q-168 and Q-267." evidence="9">
    <original>N</original>
    <variation>Q</variation>
    <location>
        <position position="146"/>
    </location>
</feature>
<feature type="mutagenesis site" description="Decreased enzyme activity with sphingomyelin and para-nitrophenylphosphorylcholine." evidence="12">
    <original>Y</original>
    <variation>L</variation>
    <location>
        <position position="166"/>
    </location>
</feature>
<feature type="mutagenesis site" description="Strongly reduces N-glycosylation and enzyme activity; when associated with Q-100; Q-121; Q-168 and Q-267." evidence="9">
    <original>N</original>
    <variation>Q</variation>
    <location>
        <position position="168"/>
    </location>
</feature>
<feature type="mutagenesis site" description="Strongly reduces N-glycosylation and enzyme activity; when associated with Q-100; Q-121; Q-146 and Q-168." evidence="9">
    <original>N</original>
    <variation>Q</variation>
    <location>
        <position position="267"/>
    </location>
</feature>
<feature type="mutagenesis site" description="Decreased enzyme activity; when associated with E-343." evidence="12">
    <original>R</original>
    <variation>E</variation>
    <location>
        <position position="271"/>
    </location>
</feature>
<feature type="mutagenesis site" description="Decreased enzyme activity; when associated with E-271." evidence="12">
    <original>R</original>
    <variation>E</variation>
    <location>
        <position position="343"/>
    </location>
</feature>
<feature type="mutagenesis site" description="Loss of enzyme activity with sphingomyelin." evidence="12">
    <original>INVQF</original>
    <variation>ENEQE</variation>
    <location>
        <begin position="344"/>
        <end position="348"/>
    </location>
</feature>
<feature type="mutagenesis site" description="Loss of enzyme activity with sphingomyelin." evidence="12">
    <original>INVQF</original>
    <variation>NNNQN</variation>
    <location>
        <begin position="344"/>
        <end position="348"/>
    </location>
</feature>
<feature type="mutagenesis site" description="Loss of activity." evidence="6">
    <original>H</original>
    <variation>A</variation>
    <location>
        <position position="353"/>
    </location>
</feature>
<feature type="sequence conflict" description="In Ref. 2; AAQ88985." evidence="17" ref="2">
    <original>T</original>
    <variation>I</variation>
    <location>
        <position position="101"/>
    </location>
</feature>
<feature type="sequence conflict" description="In Ref. 3; BAC86504." evidence="17" ref="3">
    <original>Y</original>
    <variation>N</variation>
    <location>
        <position position="388"/>
    </location>
</feature>
<feature type="strand" evidence="27">
    <location>
        <begin position="32"/>
        <end position="38"/>
    </location>
</feature>
<feature type="turn" evidence="27">
    <location>
        <begin position="43"/>
        <end position="48"/>
    </location>
</feature>
<feature type="helix" evidence="27">
    <location>
        <begin position="52"/>
        <end position="60"/>
    </location>
</feature>
<feature type="strand" evidence="27">
    <location>
        <begin position="61"/>
        <end position="65"/>
    </location>
</feature>
<feature type="helix" evidence="27">
    <location>
        <begin position="75"/>
        <end position="84"/>
    </location>
</feature>
<feature type="helix" evidence="27">
    <location>
        <begin position="88"/>
        <end position="91"/>
    </location>
</feature>
<feature type="strand" evidence="27">
    <location>
        <begin position="96"/>
        <end position="100"/>
    </location>
</feature>
<feature type="turn" evidence="27">
    <location>
        <begin position="101"/>
        <end position="104"/>
    </location>
</feature>
<feature type="strand" evidence="27">
    <location>
        <begin position="105"/>
        <end position="107"/>
    </location>
</feature>
<feature type="helix" evidence="27">
    <location>
        <begin position="109"/>
        <end position="112"/>
    </location>
</feature>
<feature type="helix" evidence="27">
    <location>
        <begin position="116"/>
        <end position="119"/>
    </location>
</feature>
<feature type="helix" evidence="27">
    <location>
        <begin position="126"/>
        <end position="131"/>
    </location>
</feature>
<feature type="turn" evidence="27">
    <location>
        <begin position="132"/>
        <end position="134"/>
    </location>
</feature>
<feature type="strand" evidence="27">
    <location>
        <begin position="137"/>
        <end position="141"/>
    </location>
</feature>
<feature type="turn" evidence="27">
    <location>
        <begin position="143"/>
        <end position="146"/>
    </location>
</feature>
<feature type="strand" evidence="27">
    <location>
        <begin position="155"/>
        <end position="158"/>
    </location>
</feature>
<feature type="helix" evidence="27">
    <location>
        <begin position="169"/>
        <end position="185"/>
    </location>
</feature>
<feature type="strand" evidence="27">
    <location>
        <begin position="189"/>
        <end position="195"/>
    </location>
</feature>
<feature type="helix" evidence="27">
    <location>
        <begin position="199"/>
        <end position="205"/>
    </location>
</feature>
<feature type="helix" evidence="27">
    <location>
        <begin position="210"/>
        <end position="232"/>
    </location>
</feature>
<feature type="turn" evidence="27">
    <location>
        <begin position="236"/>
        <end position="238"/>
    </location>
</feature>
<feature type="strand" evidence="27">
    <location>
        <begin position="239"/>
        <end position="244"/>
    </location>
</feature>
<feature type="helix" evidence="27">
    <location>
        <begin position="262"/>
        <end position="264"/>
    </location>
</feature>
<feature type="helix" evidence="27">
    <location>
        <begin position="270"/>
        <end position="272"/>
    </location>
</feature>
<feature type="strand" evidence="27">
    <location>
        <begin position="273"/>
        <end position="277"/>
    </location>
</feature>
<feature type="strand" evidence="27">
    <location>
        <begin position="283"/>
        <end position="288"/>
    </location>
</feature>
<feature type="helix" evidence="27">
    <location>
        <begin position="293"/>
        <end position="300"/>
    </location>
</feature>
<feature type="strand" evidence="27">
    <location>
        <begin position="307"/>
        <end position="311"/>
    </location>
</feature>
<feature type="helix" evidence="27">
    <location>
        <begin position="312"/>
        <end position="314"/>
    </location>
</feature>
<feature type="helix" evidence="27">
    <location>
        <begin position="317"/>
        <end position="319"/>
    </location>
</feature>
<feature type="strand" evidence="27">
    <location>
        <begin position="329"/>
        <end position="334"/>
    </location>
</feature>
<feature type="strand" evidence="27">
    <location>
        <begin position="350"/>
        <end position="352"/>
    </location>
</feature>
<feature type="helix" evidence="27">
    <location>
        <begin position="360"/>
        <end position="362"/>
    </location>
</feature>
<feature type="strand" evidence="27">
    <location>
        <begin position="366"/>
        <end position="370"/>
    </location>
</feature>
<feature type="strand" evidence="27">
    <location>
        <begin position="375"/>
        <end position="379"/>
    </location>
</feature>
<feature type="helix" evidence="27">
    <location>
        <begin position="384"/>
        <end position="386"/>
    </location>
</feature>
<feature type="helix" evidence="27">
    <location>
        <begin position="387"/>
        <end position="395"/>
    </location>
</feature>
<feature type="helix" evidence="27">
    <location>
        <begin position="406"/>
        <end position="408"/>
    </location>
</feature>
<feature type="helix" evidence="27">
    <location>
        <begin position="410"/>
        <end position="412"/>
    </location>
</feature>
<comment type="function">
    <text evidence="1 4 5 7 10 12">Choline-specific phosphodiesterase that hydrolyzes sphingomyelin releasing the ceramide and phosphocholine and therefore is involved in sphingomyelin digestion, ceramide formation, and fatty acid (FA) absorption in the gastrointestinal tract (PubMed:12671034, PubMed:12885774, PubMed:15205117, PubMed:16255717, PubMed:28292932). Also has phospholipase C activity and can also cleave phosphocholine from palmitoyl lyso-phosphatidylcholine and platelet-activating factor (PAF) leading to its inactivation (PubMed:12885774, PubMed:16255717). Does not have nucleotide pyrophosphatase activity (PubMed:12885774). May promote cholesterol absorption by affecting the levels of sphingomyelin derived from either diet or endogenous sources, in the intestinal lumen (By similarity).</text>
</comment>
<comment type="catalytic activity">
    <reaction evidence="4 5 7 10 12">
        <text>a sphingomyelin + H2O = phosphocholine + an N-acylsphing-4-enine + H(+)</text>
        <dbReference type="Rhea" id="RHEA:19253"/>
        <dbReference type="ChEBI" id="CHEBI:15377"/>
        <dbReference type="ChEBI" id="CHEBI:15378"/>
        <dbReference type="ChEBI" id="CHEBI:17636"/>
        <dbReference type="ChEBI" id="CHEBI:52639"/>
        <dbReference type="ChEBI" id="CHEBI:295975"/>
        <dbReference type="EC" id="3.1.4.12"/>
    </reaction>
    <physiologicalReaction direction="left-to-right" evidence="10">
        <dbReference type="Rhea" id="RHEA:19254"/>
    </physiologicalReaction>
</comment>
<comment type="catalytic activity">
    <reaction evidence="5">
        <text>1-hexadecanoyl-sn-glycero-3-phosphocholine + H2O = 1-hexadecanoyl-sn-glycerol + phosphocholine + H(+)</text>
        <dbReference type="Rhea" id="RHEA:41119"/>
        <dbReference type="ChEBI" id="CHEBI:15377"/>
        <dbReference type="ChEBI" id="CHEBI:15378"/>
        <dbReference type="ChEBI" id="CHEBI:72998"/>
        <dbReference type="ChEBI" id="CHEBI:75542"/>
        <dbReference type="ChEBI" id="CHEBI:295975"/>
    </reaction>
    <physiologicalReaction direction="left-to-right" evidence="18">
        <dbReference type="Rhea" id="RHEA:41120"/>
    </physiologicalReaction>
</comment>
<comment type="catalytic activity">
    <reaction evidence="10">
        <text>a 1-O-alkyl-2-acetyl-sn-glycero-3-phosphocholine + H2O = a 1-O-alkyl-2-acetyl-sn-glycerol + phosphocholine + H(+)</text>
        <dbReference type="Rhea" id="RHEA:63380"/>
        <dbReference type="ChEBI" id="CHEBI:15377"/>
        <dbReference type="ChEBI" id="CHEBI:15378"/>
        <dbReference type="ChEBI" id="CHEBI:16291"/>
        <dbReference type="ChEBI" id="CHEBI:36707"/>
        <dbReference type="ChEBI" id="CHEBI:295975"/>
    </reaction>
    <physiologicalReaction direction="left-to-right" evidence="10">
        <dbReference type="Rhea" id="RHEA:63381"/>
    </physiologicalReaction>
</comment>
<comment type="catalytic activity">
    <reaction evidence="2">
        <text>1-O-octadecyl-2-acetyl-sn-glycero-3-phosphocholine + H2O = 1-O-octadecyl-2-acetyl-sn-glycerol + phosphocholine + H(+)</text>
        <dbReference type="Rhea" id="RHEA:63384"/>
        <dbReference type="ChEBI" id="CHEBI:15377"/>
        <dbReference type="ChEBI" id="CHEBI:15378"/>
        <dbReference type="ChEBI" id="CHEBI:52450"/>
        <dbReference type="ChEBI" id="CHEBI:147296"/>
        <dbReference type="ChEBI" id="CHEBI:295975"/>
    </reaction>
    <physiologicalReaction direction="left-to-right" evidence="2">
        <dbReference type="Rhea" id="RHEA:63385"/>
    </physiologicalReaction>
</comment>
<comment type="cofactor">
    <cofactor evidence="12">
        <name>Zn(2+)</name>
        <dbReference type="ChEBI" id="CHEBI:29105"/>
    </cofactor>
</comment>
<comment type="activity regulation">
    <text evidence="5">Inhibited in a dose dependent manner by ATP, imidazole, orthovanadate and zinc ion. Not inhibited by ADP, AMP and EDTA.</text>
</comment>
<comment type="interaction">
    <interactant intactId="EBI-12047821">
        <id>Q6UWV6</id>
    </interactant>
    <interactant intactId="EBI-1642333">
        <id>Q9BYV9</id>
        <label>BACH2</label>
    </interactant>
    <organismsDiffer>false</organismsDiffer>
    <experiments>3</experiments>
</comment>
<comment type="interaction">
    <interactant intactId="EBI-12047821">
        <id>Q6UWV6</id>
    </interactant>
    <interactant intactId="EBI-618309">
        <id>Q08379</id>
        <label>GOLGA2</label>
    </interactant>
    <organismsDiffer>false</organismsDiffer>
    <experiments>3</experiments>
</comment>
<comment type="interaction">
    <interactant intactId="EBI-12047821">
        <id>Q6UWV6</id>
    </interactant>
    <interactant intactId="EBI-3958099">
        <id>P26371</id>
        <label>KRTAP5-9</label>
    </interactant>
    <organismsDiffer>false</organismsDiffer>
    <experiments>3</experiments>
</comment>
<comment type="interaction">
    <interactant intactId="EBI-12047821">
        <id>Q6UWV6</id>
    </interactant>
    <interactant intactId="EBI-12003882">
        <id>Q5JTD7</id>
        <label>LRRC73</label>
    </interactant>
    <organismsDiffer>false</organismsDiffer>
    <experiments>3</experiments>
</comment>
<comment type="interaction">
    <interactant intactId="EBI-12047821">
        <id>Q6UWV6</id>
    </interactant>
    <interactant intactId="EBI-11522433">
        <id>Q5JR59-3</id>
        <label>MTUS2</label>
    </interactant>
    <organismsDiffer>false</organismsDiffer>
    <experiments>3</experiments>
</comment>
<comment type="subcellular location">
    <subcellularLocation>
        <location evidence="4 7">Cell membrane</location>
        <topology evidence="4 7">Single-pass type I membrane protein</topology>
    </subcellularLocation>
    <text evidence="4 5 7">The catalytic domain is released into the extracellular medium when cells are treated with trypsin (PubMed:15205117). Localized at the surface of the microvillar membrane in small intestine enterocytes, and in endosome-like structures situated beneath the microvillar membrane, and in Golgi complex (PubMed:12671034, PubMed:12885774).</text>
</comment>
<comment type="tissue specificity">
    <text evidence="4 5">Detected in the colon (at protein level). Expressed in the duodenum, jejunum and liver and at low levels in the ileum. Expression was very low in the esophagus, stomach and colon.</text>
</comment>
<comment type="PTM">
    <text evidence="9 11">N-glycosylated; required for activity and transport to the plasma membrane.</text>
</comment>
<comment type="miscellaneous">
    <text evidence="13 15">Decreased levels of alkaline sphingomyelin phosphodiesterase may be associated with colon cancer.</text>
</comment>
<comment type="similarity">
    <text evidence="17">Belongs to the nucleotide pyrophosphatase/phosphodiesterase family.</text>
</comment>
<comment type="online information" name="Atlas of Genetics and Cytogenetics in Oncology and Haematology">
    <link uri="https://atlasgeneticsoncology.org/gene/44055/ENPP7"/>
</comment>
<organism>
    <name type="scientific">Homo sapiens</name>
    <name type="common">Human</name>
    <dbReference type="NCBI Taxonomy" id="9606"/>
    <lineage>
        <taxon>Eukaryota</taxon>
        <taxon>Metazoa</taxon>
        <taxon>Chordata</taxon>
        <taxon>Craniata</taxon>
        <taxon>Vertebrata</taxon>
        <taxon>Euteleostomi</taxon>
        <taxon>Mammalia</taxon>
        <taxon>Eutheria</taxon>
        <taxon>Euarchontoglires</taxon>
        <taxon>Primates</taxon>
        <taxon>Haplorrhini</taxon>
        <taxon>Catarrhini</taxon>
        <taxon>Hominidae</taxon>
        <taxon>Homo</taxon>
    </lineage>
</organism>
<keyword id="KW-0002">3D-structure</keyword>
<keyword id="KW-1003">Cell membrane</keyword>
<keyword id="KW-0903">Direct protein sequencing</keyword>
<keyword id="KW-0325">Glycoprotein</keyword>
<keyword id="KW-0378">Hydrolase</keyword>
<keyword id="KW-0443">Lipid metabolism</keyword>
<keyword id="KW-0472">Membrane</keyword>
<keyword id="KW-0479">Metal-binding</keyword>
<keyword id="KW-1267">Proteomics identification</keyword>
<keyword id="KW-1185">Reference proteome</keyword>
<keyword id="KW-0732">Signal</keyword>
<keyword id="KW-0812">Transmembrane</keyword>
<keyword id="KW-1133">Transmembrane helix</keyword>
<keyword id="KW-0862">Zinc</keyword>